<protein>
    <recommendedName>
        <fullName>Tachykinin-4</fullName>
    </recommendedName>
    <alternativeName>
        <fullName>Preprotachykinin-C</fullName>
        <shortName>PPT-C</shortName>
    </alternativeName>
    <component>
        <recommendedName>
            <fullName>Endokinin-1</fullName>
        </recommendedName>
    </component>
    <component>
        <recommendedName>
            <fullName>Endokinin-2</fullName>
        </recommendedName>
    </component>
</protein>
<name>TKN4_RABIT</name>
<proteinExistence type="inferred from homology"/>
<evidence type="ECO:0000250" key="1"/>
<evidence type="ECO:0000255" key="2"/>
<evidence type="ECO:0000256" key="3">
    <source>
        <dbReference type="SAM" id="MobiDB-lite"/>
    </source>
</evidence>
<evidence type="ECO:0000303" key="4">
    <source ref="1"/>
</evidence>
<evidence type="ECO:0000312" key="5">
    <source>
        <dbReference type="EMBL" id="AAS46598.1"/>
    </source>
</evidence>
<organism>
    <name type="scientific">Oryctolagus cuniculus</name>
    <name type="common">Rabbit</name>
    <dbReference type="NCBI Taxonomy" id="9986"/>
    <lineage>
        <taxon>Eukaryota</taxon>
        <taxon>Metazoa</taxon>
        <taxon>Chordata</taxon>
        <taxon>Craniata</taxon>
        <taxon>Vertebrata</taxon>
        <taxon>Euteleostomi</taxon>
        <taxon>Mammalia</taxon>
        <taxon>Eutheria</taxon>
        <taxon>Euarchontoglires</taxon>
        <taxon>Glires</taxon>
        <taxon>Lagomorpha</taxon>
        <taxon>Leporidae</taxon>
        <taxon>Oryctolagus</taxon>
    </lineage>
</organism>
<feature type="signal peptide" evidence="2">
    <location>
        <begin position="1"/>
        <end position="19"/>
    </location>
</feature>
<feature type="propeptide" id="PRO_0000320017" evidence="1">
    <location>
        <begin position="20"/>
        <end position="55"/>
    </location>
</feature>
<feature type="peptide" id="PRO_5000092471" description="Endokinin-1" evidence="5">
    <location>
        <begin position="58"/>
        <end position="67"/>
    </location>
</feature>
<feature type="peptide" id="PRO_5000092472" description="Endokinin-2" evidence="5">
    <location>
        <begin position="71"/>
        <end position="82"/>
    </location>
</feature>
<feature type="propeptide" id="PRO_0000320018" evidence="1">
    <location>
        <begin position="85"/>
        <end position="100"/>
    </location>
</feature>
<feature type="region of interest" description="Disordered" evidence="3">
    <location>
        <begin position="80"/>
        <end position="100"/>
    </location>
</feature>
<feature type="splice variant" id="VSP_052682" description="In isoform 2." evidence="4">
    <location>
        <begin position="74"/>
        <end position="91"/>
    </location>
</feature>
<reference evidence="5" key="1">
    <citation type="submission" date="2004-07" db="EMBL/GenBank/DDBJ databases">
        <authorList>
            <person name="Page N.M."/>
        </authorList>
    </citation>
    <scope>NUCLEOTIDE SEQUENCE [MRNA] (ISOFORMS 1 AND 2)</scope>
</reference>
<sequence>MPSSVTLLLLMGLSVCTSAEDGGEEQTLGAEAGPWVTVTLEAGAVASIQLQLQEVKRGKASQFFGLMGKRVRGYQMGQRGLLGRRASSTKGSVDEDQGAE</sequence>
<accession>Q6ECK6</accession>
<accession>Q6ECK5</accession>
<gene>
    <name evidence="5" type="primary">TAC4</name>
</gene>
<keyword id="KW-0025">Alternative splicing</keyword>
<keyword id="KW-0027">Amidation</keyword>
<keyword id="KW-0165">Cleavage on pair of basic residues</keyword>
<keyword id="KW-1185">Reference proteome</keyword>
<keyword id="KW-0964">Secreted</keyword>
<keyword id="KW-0732">Signal</keyword>
<dbReference type="EMBL" id="AY471576">
    <property type="protein sequence ID" value="AAS46598.1"/>
    <property type="molecule type" value="mRNA"/>
</dbReference>
<dbReference type="EMBL" id="AY471577">
    <property type="protein sequence ID" value="AAS46599.1"/>
    <property type="molecule type" value="mRNA"/>
</dbReference>
<dbReference type="RefSeq" id="NP_001075634.1">
    <molecule id="Q6ECK6-1"/>
    <property type="nucleotide sequence ID" value="NM_001082165.1"/>
</dbReference>
<dbReference type="FunCoup" id="Q6ECK6">
    <property type="interactions" value="81"/>
</dbReference>
<dbReference type="STRING" id="9986.ENSOCUP00000019855"/>
<dbReference type="PaxDb" id="9986-ENSOCUP00000019855"/>
<dbReference type="Ensembl" id="ENSOCUT00000024419.3">
    <molecule id="Q6ECK6-1"/>
    <property type="protein sequence ID" value="ENSOCUP00000019855.1"/>
    <property type="gene ID" value="ENSOCUG00000023306.3"/>
</dbReference>
<dbReference type="GeneID" id="100008925"/>
<dbReference type="KEGG" id="ocu:100008925"/>
<dbReference type="CTD" id="255061"/>
<dbReference type="eggNOG" id="ENOG502TEEE">
    <property type="taxonomic scope" value="Eukaryota"/>
</dbReference>
<dbReference type="GeneTree" id="ENSGT00390000015220"/>
<dbReference type="HOGENOM" id="CLU_133899_1_0_1"/>
<dbReference type="InParanoid" id="Q6ECK6"/>
<dbReference type="OMA" id="IARIQFQ"/>
<dbReference type="OrthoDB" id="9538060at2759"/>
<dbReference type="TreeFam" id="TF338519"/>
<dbReference type="Proteomes" id="UP000001811">
    <property type="component" value="Chromosome 19"/>
</dbReference>
<dbReference type="Bgee" id="ENSOCUG00000023306">
    <property type="expression patterns" value="Expressed in prefrontal cortex and 3 other cell types or tissues"/>
</dbReference>
<dbReference type="GO" id="GO:0005615">
    <property type="term" value="C:extracellular space"/>
    <property type="evidence" value="ECO:0007669"/>
    <property type="project" value="Ensembl"/>
</dbReference>
<dbReference type="GO" id="GO:0031835">
    <property type="term" value="F:substance P receptor binding"/>
    <property type="evidence" value="ECO:0007669"/>
    <property type="project" value="TreeGrafter"/>
</dbReference>
<dbReference type="GO" id="GO:0006954">
    <property type="term" value="P:inflammatory response"/>
    <property type="evidence" value="ECO:0007669"/>
    <property type="project" value="TreeGrafter"/>
</dbReference>
<dbReference type="GO" id="GO:0007204">
    <property type="term" value="P:positive regulation of cytosolic calcium ion concentration"/>
    <property type="evidence" value="ECO:0007669"/>
    <property type="project" value="TreeGrafter"/>
</dbReference>
<dbReference type="GO" id="GO:1902093">
    <property type="term" value="P:positive regulation of flagellated sperm motility"/>
    <property type="evidence" value="ECO:0007669"/>
    <property type="project" value="Ensembl"/>
</dbReference>
<dbReference type="GO" id="GO:0007217">
    <property type="term" value="P:tachykinin receptor signaling pathway"/>
    <property type="evidence" value="ECO:0007669"/>
    <property type="project" value="TreeGrafter"/>
</dbReference>
<dbReference type="InterPro" id="IPR013055">
    <property type="entry name" value="Tachy_Neuro_lke_CS"/>
</dbReference>
<dbReference type="PANTHER" id="PTHR11250">
    <property type="entry name" value="TACHYKININ"/>
    <property type="match status" value="1"/>
</dbReference>
<dbReference type="PANTHER" id="PTHR11250:SF2">
    <property type="entry name" value="TACHYKININ-4"/>
    <property type="match status" value="1"/>
</dbReference>
<dbReference type="PROSITE" id="PS00267">
    <property type="entry name" value="TACHYKININ"/>
    <property type="match status" value="1"/>
</dbReference>
<comment type="function">
    <text evidence="1">Tachykinins are active peptides which excite neurons, evoke behavioral responses, are potent vasodilators and secretagogues, and contract (directly or indirectly) many smooth muscles.</text>
</comment>
<comment type="subcellular location">
    <subcellularLocation>
        <location evidence="1">Secreted</location>
    </subcellularLocation>
</comment>
<comment type="alternative products">
    <event type="alternative splicing"/>
    <isoform>
        <id>Q6ECK6-1</id>
        <name>1</name>
        <name>Alpha</name>
        <sequence type="displayed"/>
    </isoform>
    <isoform>
        <id>Q6ECK6-2</id>
        <name>2</name>
        <name>Beta</name>
        <sequence type="described" ref="VSP_052682"/>
    </isoform>
</comment>
<comment type="similarity">
    <text evidence="2">Belongs to the tachykinin family.</text>
</comment>